<sequence length="166" mass="17585">MNYGNNGGGQWQPRGNNNWRPQGRGRGGGGWKGNDNRGGYRGGSSNDGGWSNFRDDGNLNFASPYQANRGNFRGNYRGGGGGGGGNQNNYGNRGRGRGGFDRGRGGGGGGNKNFGPIDANKCIIPSMWNNPWDALEKEYEQEYGVAITEKVTDPSPSPSSAEETTA</sequence>
<name>YKG3_CAEEL</name>
<organism>
    <name type="scientific">Caenorhabditis elegans</name>
    <dbReference type="NCBI Taxonomy" id="6239"/>
    <lineage>
        <taxon>Eukaryota</taxon>
        <taxon>Metazoa</taxon>
        <taxon>Ecdysozoa</taxon>
        <taxon>Nematoda</taxon>
        <taxon>Chromadorea</taxon>
        <taxon>Rhabditida</taxon>
        <taxon>Rhabditina</taxon>
        <taxon>Rhabditomorpha</taxon>
        <taxon>Rhabditoidea</taxon>
        <taxon>Rhabditidae</taxon>
        <taxon>Peloderinae</taxon>
        <taxon>Caenorhabditis</taxon>
    </lineage>
</organism>
<protein>
    <recommendedName>
        <fullName>Uncharacterized protein B0285.3</fullName>
    </recommendedName>
</protein>
<keyword id="KW-1185">Reference proteome</keyword>
<evidence type="ECO:0000256" key="1">
    <source>
        <dbReference type="SAM" id="MobiDB-lite"/>
    </source>
</evidence>
<reference key="1">
    <citation type="journal article" date="1998" name="Science">
        <title>Genome sequence of the nematode C. elegans: a platform for investigating biology.</title>
        <authorList>
            <consortium name="The C. elegans sequencing consortium"/>
        </authorList>
    </citation>
    <scope>NUCLEOTIDE SEQUENCE [LARGE SCALE GENOMIC DNA]</scope>
    <source>
        <strain>Bristol N2</strain>
    </source>
</reference>
<accession>P46553</accession>
<feature type="chain" id="PRO_0000065057" description="Uncharacterized protein B0285.3">
    <location>
        <begin position="1"/>
        <end position="166"/>
    </location>
</feature>
<feature type="region of interest" description="Disordered" evidence="1">
    <location>
        <begin position="1"/>
        <end position="117"/>
    </location>
</feature>
<feature type="compositionally biased region" description="Gly residues" evidence="1">
    <location>
        <begin position="1"/>
        <end position="10"/>
    </location>
</feature>
<feature type="compositionally biased region" description="Gly residues" evidence="1">
    <location>
        <begin position="76"/>
        <end position="86"/>
    </location>
</feature>
<dbReference type="EMBL" id="Z34533">
    <property type="protein sequence ID" value="CAA84296.1"/>
    <property type="molecule type" value="Genomic_DNA"/>
</dbReference>
<dbReference type="PIR" id="T18691">
    <property type="entry name" value="T18691"/>
</dbReference>
<dbReference type="RefSeq" id="NP_497874.1">
    <property type="nucleotide sequence ID" value="NM_065473.6"/>
</dbReference>
<dbReference type="BioGRID" id="40796">
    <property type="interactions" value="2"/>
</dbReference>
<dbReference type="FunCoup" id="P46553">
    <property type="interactions" value="1458"/>
</dbReference>
<dbReference type="STRING" id="6239.B0285.3.1"/>
<dbReference type="PaxDb" id="6239-B0285.3"/>
<dbReference type="PeptideAtlas" id="P46553"/>
<dbReference type="EnsemblMetazoa" id="B0285.3.1">
    <property type="protein sequence ID" value="B0285.3.1"/>
    <property type="gene ID" value="WBGene00007136"/>
</dbReference>
<dbReference type="GeneID" id="175560"/>
<dbReference type="KEGG" id="cel:CELE_B0285.3"/>
<dbReference type="UCSC" id="B0285.3">
    <property type="organism name" value="c. elegans"/>
</dbReference>
<dbReference type="AGR" id="WB:WBGene00007136"/>
<dbReference type="CTD" id="175560"/>
<dbReference type="WormBase" id="B0285.3">
    <property type="protein sequence ID" value="CE00667"/>
    <property type="gene ID" value="WBGene00007136"/>
</dbReference>
<dbReference type="eggNOG" id="ENOG502TIKI">
    <property type="taxonomic scope" value="Eukaryota"/>
</dbReference>
<dbReference type="HOGENOM" id="CLU_1548991_0_0_1"/>
<dbReference type="InParanoid" id="P46553"/>
<dbReference type="OMA" id="PAMWANP"/>
<dbReference type="OrthoDB" id="5877105at2759"/>
<dbReference type="PRO" id="PR:P46553"/>
<dbReference type="Proteomes" id="UP000001940">
    <property type="component" value="Chromosome III"/>
</dbReference>
<dbReference type="Bgee" id="WBGene00007136">
    <property type="expression patterns" value="Expressed in embryo and 4 other cell types or tissues"/>
</dbReference>
<proteinExistence type="predicted"/>
<gene>
    <name type="ORF">B0285.3</name>
</gene>